<proteinExistence type="evidence at protein level"/>
<name>PTC_ENTFA</name>
<evidence type="ECO:0000250" key="1"/>
<evidence type="ECO:0000269" key="2">
    <source>
    </source>
</evidence>
<evidence type="ECO:0000269" key="3">
    <source>
    </source>
</evidence>
<evidence type="ECO:0000269" key="4">
    <source>
    </source>
</evidence>
<evidence type="ECO:0000269" key="5">
    <source>
    </source>
</evidence>
<evidence type="ECO:0000305" key="6"/>
<evidence type="ECO:0007829" key="7">
    <source>
        <dbReference type="PDB" id="3TXX"/>
    </source>
</evidence>
<evidence type="ECO:0007829" key="8">
    <source>
        <dbReference type="PDB" id="4A8T"/>
    </source>
</evidence>
<evidence type="ECO:0007829" key="9">
    <source>
        <dbReference type="PDB" id="4AM8"/>
    </source>
</evidence>
<gene>
    <name type="primary">ptcA</name>
    <name type="synonym">agcB</name>
    <name type="synonym">argF-2</name>
    <name type="ordered locus">EF_0732</name>
</gene>
<organism>
    <name type="scientific">Enterococcus faecalis (strain ATCC 700802 / V583)</name>
    <dbReference type="NCBI Taxonomy" id="226185"/>
    <lineage>
        <taxon>Bacteria</taxon>
        <taxon>Bacillati</taxon>
        <taxon>Bacillota</taxon>
        <taxon>Bacilli</taxon>
        <taxon>Lactobacillales</taxon>
        <taxon>Enterococcaceae</taxon>
        <taxon>Enterococcus</taxon>
    </lineage>
</organism>
<comment type="function">
    <text evidence="4 5">Catalyzes the phosphorolysis of N-carbamoylputrescine to form carbamoyl phosphate and putrescine. Is involved in the degradation pathway of the polyamine agmatine. Also has weak activity with ornithine and cadaverine.</text>
</comment>
<comment type="catalytic activity">
    <reaction evidence="3 4 5">
        <text>carbamoyl phosphate + putrescine = N-carbamoylputrescine + phosphate + H(+)</text>
        <dbReference type="Rhea" id="RHEA:21936"/>
        <dbReference type="ChEBI" id="CHEBI:15378"/>
        <dbReference type="ChEBI" id="CHEBI:43474"/>
        <dbReference type="ChEBI" id="CHEBI:58228"/>
        <dbReference type="ChEBI" id="CHEBI:58318"/>
        <dbReference type="ChEBI" id="CHEBI:326268"/>
        <dbReference type="EC" id="2.1.3.6"/>
    </reaction>
    <physiologicalReaction direction="right-to-left" evidence="3 4 5">
        <dbReference type="Rhea" id="RHEA:21938"/>
    </physiologicalReaction>
</comment>
<comment type="activity regulation">
    <text evidence="2 3 4 5">Inhibited by spermidine (PubMed:116850). Inhibited by N-(phosphonoacetyl)-putrescine (PubMed:17028272, PubMed:22363663, PubMed:4621632). Inhibited by N-(phosphonoacetyl)-L-ornithine (PubMed:22363663).</text>
</comment>
<comment type="biophysicochemical properties">
    <kinetics>
        <KM evidence="3">58 uM for carbamoyl phosphate</KM>
        <KM evidence="3">2.3 mM for putrescine</KM>
        <KM evidence="4">1.41 mM for putrescine</KM>
        <KM evidence="4">36.4 mM for ornithine</KM>
    </kinetics>
    <phDependence>
        <text evidence="2">Optimum pH is 6.7 with 10 mM putrescine and 10 mM carbamoyl phosphate, 7.8 with 0.2 mM putrescine and 0.2 mM carbamoyl phosphate, and 9.0 with 0.5 mM putrescine and 10 mM carbamoyl phosphate.</text>
    </phDependence>
</comment>
<comment type="pathway">
    <text>Amine and polyamine biosynthesis; putrescine biosynthesis via agmatine pathway; putrescine from N-carbamoylputrescine (transferase route): step 1/1.</text>
</comment>
<comment type="subunit">
    <text evidence="2 3">Homotrimer.</text>
</comment>
<comment type="subcellular location">
    <subcellularLocation>
        <location evidence="1">Cytoplasm</location>
    </subcellularLocation>
</comment>
<comment type="similarity">
    <text evidence="6">Belongs to the aspartate/ornithine carbamoyltransferase superfamily. PTCase family.</text>
</comment>
<accession>Q837U7</accession>
<keyword id="KW-0002">3D-structure</keyword>
<keyword id="KW-0963">Cytoplasm</keyword>
<keyword id="KW-0903">Direct protein sequencing</keyword>
<keyword id="KW-0620">Polyamine biosynthesis</keyword>
<keyword id="KW-1185">Reference proteome</keyword>
<keyword id="KW-0808">Transferase</keyword>
<feature type="chain" id="PRO_0000112923" description="Putrescine carbamoyltransferase">
    <location>
        <begin position="1"/>
        <end position="339"/>
    </location>
</feature>
<feature type="binding site" evidence="1">
    <location>
        <begin position="52"/>
        <end position="56"/>
    </location>
    <ligand>
        <name>carbamoyl phosphate</name>
        <dbReference type="ChEBI" id="CHEBI:58228"/>
    </ligand>
</feature>
<feature type="binding site" evidence="1">
    <location>
        <position position="103"/>
    </location>
    <ligand>
        <name>carbamoyl phosphate</name>
        <dbReference type="ChEBI" id="CHEBI:58228"/>
    </ligand>
</feature>
<feature type="binding site" evidence="1">
    <location>
        <position position="130"/>
    </location>
    <ligand>
        <name>carbamoyl phosphate</name>
        <dbReference type="ChEBI" id="CHEBI:58228"/>
    </ligand>
</feature>
<feature type="binding site" evidence="1">
    <location>
        <begin position="268"/>
        <end position="271"/>
    </location>
    <ligand>
        <name>putrescine</name>
        <dbReference type="ChEBI" id="CHEBI:326268"/>
    </ligand>
</feature>
<feature type="site" description="Important for structural integrity" evidence="1">
    <location>
        <position position="27"/>
    </location>
</feature>
<feature type="site" description="Important for structural integrity" evidence="1">
    <location>
        <position position="143"/>
    </location>
</feature>
<feature type="mutagenesis site" description="Loss of activity with putrescine and ornithine." evidence="4">
    <original>R</original>
    <variation>G</variation>
    <location>
        <position position="54"/>
    </location>
</feature>
<feature type="mutagenesis site" description="Loss of activity with putrescine; increased activity with ornithine." evidence="4">
    <original>YGLY</original>
    <variation>VSMG</variation>
    <location>
        <begin position="230"/>
        <end position="233"/>
    </location>
</feature>
<feature type="helix" evidence="8">
    <location>
        <begin position="8"/>
        <end position="10"/>
    </location>
</feature>
<feature type="helix" evidence="8">
    <location>
        <begin position="13"/>
        <end position="31"/>
    </location>
</feature>
<feature type="turn" evidence="8">
    <location>
        <begin position="38"/>
        <end position="41"/>
    </location>
</feature>
<feature type="strand" evidence="8">
    <location>
        <begin position="43"/>
        <end position="50"/>
    </location>
</feature>
<feature type="helix" evidence="8">
    <location>
        <begin position="54"/>
        <end position="65"/>
    </location>
</feature>
<feature type="strand" evidence="8">
    <location>
        <begin position="69"/>
        <end position="73"/>
    </location>
</feature>
<feature type="turn" evidence="9">
    <location>
        <begin position="75"/>
        <end position="77"/>
    </location>
</feature>
<feature type="strand" evidence="8">
    <location>
        <begin position="80"/>
        <end position="84"/>
    </location>
</feature>
<feature type="helix" evidence="8">
    <location>
        <begin position="86"/>
        <end position="96"/>
    </location>
</feature>
<feature type="strand" evidence="8">
    <location>
        <begin position="98"/>
        <end position="103"/>
    </location>
</feature>
<feature type="helix" evidence="8">
    <location>
        <begin position="107"/>
        <end position="116"/>
    </location>
</feature>
<feature type="strand" evidence="8">
    <location>
        <begin position="121"/>
        <end position="123"/>
    </location>
</feature>
<feature type="helix" evidence="8">
    <location>
        <begin position="131"/>
        <end position="143"/>
    </location>
</feature>
<feature type="helix" evidence="8">
    <location>
        <begin position="151"/>
        <end position="153"/>
    </location>
</feature>
<feature type="strand" evidence="8">
    <location>
        <begin position="155"/>
        <end position="161"/>
    </location>
</feature>
<feature type="helix" evidence="8">
    <location>
        <begin position="164"/>
        <end position="175"/>
    </location>
</feature>
<feature type="strand" evidence="8">
    <location>
        <begin position="179"/>
        <end position="183"/>
    </location>
</feature>
<feature type="helix" evidence="7">
    <location>
        <begin position="186"/>
        <end position="188"/>
    </location>
</feature>
<feature type="helix" evidence="8">
    <location>
        <begin position="192"/>
        <end position="205"/>
    </location>
</feature>
<feature type="strand" evidence="8">
    <location>
        <begin position="208"/>
        <end position="212"/>
    </location>
</feature>
<feature type="helix" evidence="8">
    <location>
        <begin position="215"/>
        <end position="218"/>
    </location>
</feature>
<feature type="strand" evidence="8">
    <location>
        <begin position="222"/>
        <end position="226"/>
    </location>
</feature>
<feature type="strand" evidence="9">
    <location>
        <begin position="229"/>
        <end position="232"/>
    </location>
</feature>
<feature type="helix" evidence="8">
    <location>
        <begin position="239"/>
        <end position="246"/>
    </location>
</feature>
<feature type="turn" evidence="8">
    <location>
        <begin position="247"/>
        <end position="250"/>
    </location>
</feature>
<feature type="helix" evidence="8">
    <location>
        <begin position="254"/>
        <end position="260"/>
    </location>
</feature>
<feature type="strand" evidence="8">
    <location>
        <begin position="265"/>
        <end position="268"/>
    </location>
</feature>
<feature type="turn" evidence="8">
    <location>
        <begin position="275"/>
        <end position="277"/>
    </location>
</feature>
<feature type="helix" evidence="8">
    <location>
        <begin position="280"/>
        <end position="283"/>
    </location>
</feature>
<feature type="helix" evidence="8">
    <location>
        <begin position="290"/>
        <end position="315"/>
    </location>
</feature>
<feature type="helix" evidence="9">
    <location>
        <begin position="320"/>
        <end position="335"/>
    </location>
</feature>
<protein>
    <recommendedName>
        <fullName>Putrescine carbamoyltransferase</fullName>
        <shortName>PTC</shortName>
        <shortName>PTCase</shortName>
        <ecNumber evidence="3 4 5">2.1.3.6</ecNumber>
    </recommendedName>
    <alternativeName>
        <fullName>Agmatine catabolism protein B</fullName>
    </alternativeName>
    <alternativeName>
        <fullName>Putrescine transcarbamoylase</fullName>
    </alternativeName>
    <alternativeName>
        <fullName>Putrescine transcarbamylase</fullName>
    </alternativeName>
</protein>
<dbReference type="EC" id="2.1.3.6" evidence="3 4 5"/>
<dbReference type="EMBL" id="AE016830">
    <property type="protein sequence ID" value="AAO80551.1"/>
    <property type="molecule type" value="Genomic_DNA"/>
</dbReference>
<dbReference type="RefSeq" id="NP_814481.1">
    <property type="nucleotide sequence ID" value="NC_004668.1"/>
</dbReference>
<dbReference type="RefSeq" id="WP_002355587.1">
    <property type="nucleotide sequence ID" value="NZ_KE136527.1"/>
</dbReference>
<dbReference type="PDB" id="3TXX">
    <property type="method" value="X-ray"/>
    <property type="resolution" value="3.20 A"/>
    <property type="chains" value="A/B/C/D/E/F/G/H/I/J/K/L=1-339"/>
</dbReference>
<dbReference type="PDB" id="4A8H">
    <property type="method" value="X-ray"/>
    <property type="resolution" value="2.50 A"/>
    <property type="chains" value="A/B=1-339"/>
</dbReference>
<dbReference type="PDB" id="4A8P">
    <property type="method" value="X-ray"/>
    <property type="resolution" value="2.00 A"/>
    <property type="chains" value="A/B/C/D/E/F=1-339"/>
</dbReference>
<dbReference type="PDB" id="4A8T">
    <property type="method" value="X-ray"/>
    <property type="resolution" value="1.59 A"/>
    <property type="chains" value="A=1-317"/>
</dbReference>
<dbReference type="PDB" id="4AM8">
    <property type="method" value="X-ray"/>
    <property type="resolution" value="1.99 A"/>
    <property type="chains" value="A/B/C/D/E/F=1-339"/>
</dbReference>
<dbReference type="PDBsum" id="3TXX"/>
<dbReference type="PDBsum" id="4A8H"/>
<dbReference type="PDBsum" id="4A8P"/>
<dbReference type="PDBsum" id="4A8T"/>
<dbReference type="PDBsum" id="4AM8"/>
<dbReference type="SMR" id="Q837U7"/>
<dbReference type="STRING" id="226185.EF_0732"/>
<dbReference type="EnsemblBacteria" id="AAO80551">
    <property type="protein sequence ID" value="AAO80551"/>
    <property type="gene ID" value="EF_0732"/>
</dbReference>
<dbReference type="GeneID" id="60893028"/>
<dbReference type="KEGG" id="efa:EF0732"/>
<dbReference type="PATRIC" id="fig|226185.45.peg.2673"/>
<dbReference type="eggNOG" id="COG0078">
    <property type="taxonomic scope" value="Bacteria"/>
</dbReference>
<dbReference type="HOGENOM" id="CLU_043846_3_1_9"/>
<dbReference type="BRENDA" id="2.1.3.3">
    <property type="organism ID" value="2095"/>
</dbReference>
<dbReference type="BRENDA" id="2.1.3.6">
    <property type="organism ID" value="2095"/>
</dbReference>
<dbReference type="SABIO-RK" id="Q837U7"/>
<dbReference type="UniPathway" id="UPA00534">
    <property type="reaction ID" value="UER00941"/>
</dbReference>
<dbReference type="EvolutionaryTrace" id="Q837U7"/>
<dbReference type="Proteomes" id="UP000001415">
    <property type="component" value="Chromosome"/>
</dbReference>
<dbReference type="GO" id="GO:0005737">
    <property type="term" value="C:cytoplasm"/>
    <property type="evidence" value="ECO:0007669"/>
    <property type="project" value="UniProtKB-SubCell"/>
</dbReference>
<dbReference type="GO" id="GO:0016597">
    <property type="term" value="F:amino acid binding"/>
    <property type="evidence" value="ECO:0007669"/>
    <property type="project" value="InterPro"/>
</dbReference>
<dbReference type="GO" id="GO:0004585">
    <property type="term" value="F:ornithine carbamoyltransferase activity"/>
    <property type="evidence" value="ECO:0007669"/>
    <property type="project" value="UniProtKB-ARBA"/>
</dbReference>
<dbReference type="GO" id="GO:0050231">
    <property type="term" value="F:putrescine carbamoyltransferase activity"/>
    <property type="evidence" value="ECO:0007669"/>
    <property type="project" value="UniProtKB-UniRule"/>
</dbReference>
<dbReference type="GO" id="GO:0042450">
    <property type="term" value="P:arginine biosynthetic process via ornithine"/>
    <property type="evidence" value="ECO:0007669"/>
    <property type="project" value="TreeGrafter"/>
</dbReference>
<dbReference type="GO" id="GO:0019240">
    <property type="term" value="P:citrulline biosynthetic process"/>
    <property type="evidence" value="ECO:0007669"/>
    <property type="project" value="TreeGrafter"/>
</dbReference>
<dbReference type="GO" id="GO:0033390">
    <property type="term" value="P:putrescine biosynthetic process from arginine via N-carbamoylputrescine"/>
    <property type="evidence" value="ECO:0007669"/>
    <property type="project" value="UniProtKB-UniRule"/>
</dbReference>
<dbReference type="FunFam" id="3.40.50.1370:FF:000008">
    <property type="entry name" value="Ornithine carbamoyltransferase"/>
    <property type="match status" value="1"/>
</dbReference>
<dbReference type="Gene3D" id="3.40.50.1370">
    <property type="entry name" value="Aspartate/ornithine carbamoyltransferase"/>
    <property type="match status" value="2"/>
</dbReference>
<dbReference type="HAMAP" id="MF_02102">
    <property type="entry name" value="PTCase"/>
    <property type="match status" value="1"/>
</dbReference>
<dbReference type="InterPro" id="IPR006132">
    <property type="entry name" value="Asp/Orn_carbamoyltranf_P-bd"/>
</dbReference>
<dbReference type="InterPro" id="IPR006130">
    <property type="entry name" value="Asp/Orn_carbamoylTrfase"/>
</dbReference>
<dbReference type="InterPro" id="IPR036901">
    <property type="entry name" value="Asp/Orn_carbamoylTrfase_sf"/>
</dbReference>
<dbReference type="InterPro" id="IPR006131">
    <property type="entry name" value="Asp_carbamoyltransf_Asp/Orn-bd"/>
</dbReference>
<dbReference type="InterPro" id="IPR002292">
    <property type="entry name" value="Orn/put_carbamltrans"/>
</dbReference>
<dbReference type="InterPro" id="IPR024903">
    <property type="entry name" value="PtcA"/>
</dbReference>
<dbReference type="NCBIfam" id="TIGR00658">
    <property type="entry name" value="orni_carb_tr"/>
    <property type="match status" value="1"/>
</dbReference>
<dbReference type="NCBIfam" id="NF001986">
    <property type="entry name" value="PRK00779.1"/>
    <property type="match status" value="1"/>
</dbReference>
<dbReference type="NCBIfam" id="TIGR04384">
    <property type="entry name" value="putr_carbamoyl"/>
    <property type="match status" value="1"/>
</dbReference>
<dbReference type="PANTHER" id="PTHR45753">
    <property type="entry name" value="ORNITHINE CARBAMOYLTRANSFERASE, MITOCHONDRIAL"/>
    <property type="match status" value="1"/>
</dbReference>
<dbReference type="PANTHER" id="PTHR45753:SF3">
    <property type="entry name" value="ORNITHINE TRANSCARBAMYLASE, MITOCHONDRIAL"/>
    <property type="match status" value="1"/>
</dbReference>
<dbReference type="Pfam" id="PF00185">
    <property type="entry name" value="OTCace"/>
    <property type="match status" value="1"/>
</dbReference>
<dbReference type="Pfam" id="PF02729">
    <property type="entry name" value="OTCace_N"/>
    <property type="match status" value="1"/>
</dbReference>
<dbReference type="PRINTS" id="PR00100">
    <property type="entry name" value="AOTCASE"/>
</dbReference>
<dbReference type="PRINTS" id="PR00102">
    <property type="entry name" value="OTCASE"/>
</dbReference>
<dbReference type="SUPFAM" id="SSF53671">
    <property type="entry name" value="Aspartate/ornithine carbamoyltransferase"/>
    <property type="match status" value="1"/>
</dbReference>
<reference key="1">
    <citation type="journal article" date="2003" name="Science">
        <title>Role of mobile DNA in the evolution of vancomycin-resistant Enterococcus faecalis.</title>
        <authorList>
            <person name="Paulsen I.T."/>
            <person name="Banerjei L."/>
            <person name="Myers G.S.A."/>
            <person name="Nelson K.E."/>
            <person name="Seshadri R."/>
            <person name="Read T.D."/>
            <person name="Fouts D.E."/>
            <person name="Eisen J.A."/>
            <person name="Gill S.R."/>
            <person name="Heidelberg J.F."/>
            <person name="Tettelin H."/>
            <person name="Dodson R.J."/>
            <person name="Umayam L.A."/>
            <person name="Brinkac L.M."/>
            <person name="Beanan M.J."/>
            <person name="Daugherty S.C."/>
            <person name="DeBoy R.T."/>
            <person name="Durkin S.A."/>
            <person name="Kolonay J.F."/>
            <person name="Madupu R."/>
            <person name="Nelson W.C."/>
            <person name="Vamathevan J.J."/>
            <person name="Tran B."/>
            <person name="Upton J."/>
            <person name="Hansen T."/>
            <person name="Shetty J."/>
            <person name="Khouri H.M."/>
            <person name="Utterback T.R."/>
            <person name="Radune D."/>
            <person name="Ketchum K.A."/>
            <person name="Dougherty B.A."/>
            <person name="Fraser C.M."/>
        </authorList>
    </citation>
    <scope>NUCLEOTIDE SEQUENCE [LARGE SCALE GENOMIC DNA]</scope>
    <source>
        <strain>ATCC 700802 / V583</strain>
    </source>
</reference>
<reference key="2">
    <citation type="journal article" date="2007" name="J. Bacteriol.">
        <title>The gene cluster for agmatine catabolism of Enterococcus faecalis: study of recombinant putrescine transcarbamylase and agmatine deiminase and a snapshot of agmatine deiminase catalyzing its reaction.</title>
        <authorList>
            <person name="Llacer J.L."/>
            <person name="Polo L.M."/>
            <person name="Tavarez S."/>
            <person name="Alarcon B."/>
            <person name="Hilario R."/>
            <person name="Rubio V."/>
        </authorList>
    </citation>
    <scope>PROTEIN SEQUENCE OF 1-14</scope>
    <scope>CATALYTIC ACTIVITY</scope>
    <scope>SUBUNIT</scope>
    <scope>ACTIVITY REGULATION</scope>
    <scope>CRYSTALLIZATION</scope>
    <scope>KINETIC PARAMETERS</scope>
    <source>
        <strain>SD10</strain>
    </source>
</reference>
<reference key="3">
    <citation type="journal article" date="1989" name="J. Gen. Microbiol.">
        <title>Evolutionary relationships among bacterial carbamoyltransferases.</title>
        <authorList>
            <person name="Tricot C."/>
            <person name="De Coen J.-L."/>
            <person name="Momin P."/>
            <person name="Falmagne P."/>
            <person name="Stalon V."/>
        </authorList>
    </citation>
    <scope>PROTEIN SEQUENCE OF 2-30</scope>
    <source>
        <strain>ATCC 11700 / DSM 20409 / NCIMB 8661 / 10C1</strain>
    </source>
</reference>
<reference key="4">
    <citation type="journal article" date="1972" name="J. Bacteriol.">
        <title>Fermentation of agmatine in Streptococcus faecalis: occurrence of putrescine transcarbamoylase.</title>
        <authorList>
            <person name="Roon R.J."/>
            <person name="Barker H.A."/>
        </authorList>
    </citation>
    <scope>FUNCTION</scope>
    <scope>CATALYTIC ACTIVITY</scope>
    <source>
        <strain>ATCC 11700 / DSM 20409 / NCIMB 8661 / 10C1</strain>
    </source>
</reference>
<reference key="5">
    <citation type="journal article" date="1979" name="Eur. J. Biochem.">
        <title>Structure and properties of the putrescine carbamoyltransferase of Streptococcus faecalis.</title>
        <authorList>
            <person name="Wargnies B."/>
            <person name="Lauwers N."/>
            <person name="Stalon V."/>
        </authorList>
    </citation>
    <scope>SUBSTRATE SPECIFICITY</scope>
    <scope>SUBUNIT</scope>
    <scope>PH DEPENDENCE</scope>
    <scope>ACTIVITY REGULATION</scope>
</reference>
<reference key="6">
    <citation type="journal article" date="2004" name="Microbiology">
        <title>The difficulty of annotating genes: the case of putrescine carbamoyltransferase.</title>
        <authorList>
            <person name="Naumoff D.G."/>
            <person name="Xu Y."/>
            <person name="Stalon V."/>
            <person name="Glansdorff N."/>
            <person name="Labedan B."/>
        </authorList>
    </citation>
    <scope>GENE NAME</scope>
</reference>
<reference key="7">
    <citation type="journal article" date="2012" name="PLoS ONE">
        <title>New insight into the transcarbamylase family: the structure of putrescine transcarbamylase, a key catalyst for fermentative utilization of agmatine.</title>
        <authorList>
            <person name="Polo L.M."/>
            <person name="Gil-Ortiz F."/>
            <person name="Cantin A."/>
            <person name="Rubio V."/>
        </authorList>
    </citation>
    <scope>X-RAY CRYSTALLOGRAPHY (1.59 ANGSTROMS) OF 1-317</scope>
    <scope>CATALYTIC ACTIVITY</scope>
    <scope>ACTIVITY REGULATION</scope>
    <scope>MUTAGENESIS OF ARG-54 AND 230-TYR--TYR-233</scope>
</reference>
<sequence>MKRDYVTTETYTKEEMHYLVDLSLKIKEAIKNGYYPQLLKNKSLGMIFQQSSTRTRVSFETAMEQLGGHGEYLAPGQIQLGGHETIEDTSRVLSRLVDILMARVERHHSIVDLANCATIPVINGMSDYNHPTQELGDLCTMVEHLPEGKKLEDCKVVFVGDATQVCFSLGLITTKMGMNFVHFGPEGFQLNEEHQAKLAKNCEVSGGSFLVTDDASSVEGADFLYTDVWYGLYEAELSEEERMKVFYPKYQVNQEMMDRAGANCKFMHCLPATRGEEVTDEVIDGKNSICFDEAENRLTSIRGLLVYLMNDYEAKNPYDLIKQAEAKKELEVFLDTQSI</sequence>